<gene>
    <name evidence="1" type="primary">murA1</name>
    <name type="synonym">murA</name>
    <name type="ordered locus">spyM18_0821</name>
</gene>
<keyword id="KW-0131">Cell cycle</keyword>
<keyword id="KW-0132">Cell division</keyword>
<keyword id="KW-0133">Cell shape</keyword>
<keyword id="KW-0961">Cell wall biogenesis/degradation</keyword>
<keyword id="KW-0963">Cytoplasm</keyword>
<keyword id="KW-0573">Peptidoglycan synthesis</keyword>
<keyword id="KW-0670">Pyruvate</keyword>
<keyword id="KW-0808">Transferase</keyword>
<reference key="1">
    <citation type="journal article" date="2002" name="Proc. Natl. Acad. Sci. U.S.A.">
        <title>Genome sequence and comparative microarray analysis of serotype M18 group A Streptococcus strains associated with acute rheumatic fever outbreaks.</title>
        <authorList>
            <person name="Smoot J.C."/>
            <person name="Barbian K.D."/>
            <person name="Van Gompel J.J."/>
            <person name="Smoot L.M."/>
            <person name="Chaussee M.S."/>
            <person name="Sylva G.L."/>
            <person name="Sturdevant D.E."/>
            <person name="Ricklefs S.M."/>
            <person name="Porcella S.F."/>
            <person name="Parkins L.D."/>
            <person name="Beres S.B."/>
            <person name="Campbell D.S."/>
            <person name="Smith T.M."/>
            <person name="Zhang Q."/>
            <person name="Kapur V."/>
            <person name="Daly J.A."/>
            <person name="Veasy L.G."/>
            <person name="Musser J.M."/>
        </authorList>
    </citation>
    <scope>NUCLEOTIDE SEQUENCE [LARGE SCALE GENOMIC DNA]</scope>
    <source>
        <strain>MGAS8232</strain>
    </source>
</reference>
<feature type="chain" id="PRO_0000178940" description="UDP-N-acetylglucosamine 1-carboxyvinyltransferase 1">
    <location>
        <begin position="1"/>
        <end position="423"/>
    </location>
</feature>
<feature type="active site" description="Proton donor" evidence="1">
    <location>
        <position position="120"/>
    </location>
</feature>
<feature type="binding site" evidence="1">
    <location>
        <begin position="23"/>
        <end position="24"/>
    </location>
    <ligand>
        <name>phosphoenolpyruvate</name>
        <dbReference type="ChEBI" id="CHEBI:58702"/>
    </ligand>
</feature>
<feature type="binding site" evidence="1">
    <location>
        <position position="96"/>
    </location>
    <ligand>
        <name>UDP-N-acetyl-alpha-D-glucosamine</name>
        <dbReference type="ChEBI" id="CHEBI:57705"/>
    </ligand>
</feature>
<feature type="binding site" evidence="1">
    <location>
        <position position="309"/>
    </location>
    <ligand>
        <name>UDP-N-acetyl-alpha-D-glucosamine</name>
        <dbReference type="ChEBI" id="CHEBI:57705"/>
    </ligand>
</feature>
<feature type="binding site" evidence="1">
    <location>
        <position position="331"/>
    </location>
    <ligand>
        <name>UDP-N-acetyl-alpha-D-glucosamine</name>
        <dbReference type="ChEBI" id="CHEBI:57705"/>
    </ligand>
</feature>
<feature type="modified residue" description="2-(S-cysteinyl)pyruvic acid O-phosphothioketal" evidence="1">
    <location>
        <position position="120"/>
    </location>
</feature>
<evidence type="ECO:0000255" key="1">
    <source>
        <dbReference type="HAMAP-Rule" id="MF_00111"/>
    </source>
</evidence>
<comment type="function">
    <text evidence="1">Cell wall formation. Adds enolpyruvyl to UDP-N-acetylglucosamine.</text>
</comment>
<comment type="catalytic activity">
    <reaction evidence="1">
        <text>phosphoenolpyruvate + UDP-N-acetyl-alpha-D-glucosamine = UDP-N-acetyl-3-O-(1-carboxyvinyl)-alpha-D-glucosamine + phosphate</text>
        <dbReference type="Rhea" id="RHEA:18681"/>
        <dbReference type="ChEBI" id="CHEBI:43474"/>
        <dbReference type="ChEBI" id="CHEBI:57705"/>
        <dbReference type="ChEBI" id="CHEBI:58702"/>
        <dbReference type="ChEBI" id="CHEBI:68483"/>
        <dbReference type="EC" id="2.5.1.7"/>
    </reaction>
</comment>
<comment type="pathway">
    <text evidence="1">Cell wall biogenesis; peptidoglycan biosynthesis.</text>
</comment>
<comment type="subcellular location">
    <subcellularLocation>
        <location evidence="1">Cytoplasm</location>
    </subcellularLocation>
</comment>
<comment type="similarity">
    <text evidence="1">Belongs to the EPSP synthase family. MurA subfamily.</text>
</comment>
<protein>
    <recommendedName>
        <fullName evidence="1">UDP-N-acetylglucosamine 1-carboxyvinyltransferase 1</fullName>
        <ecNumber evidence="1">2.5.1.7</ecNumber>
    </recommendedName>
    <alternativeName>
        <fullName evidence="1">Enoylpyruvate transferase 1</fullName>
    </alternativeName>
    <alternativeName>
        <fullName evidence="1">UDP-N-acetylglucosamine enolpyruvyl transferase 1</fullName>
        <shortName evidence="1">EPT 1</shortName>
    </alternativeName>
</protein>
<name>MURA1_STRP8</name>
<proteinExistence type="inferred from homology"/>
<accession>P65459</accession>
<accession>Q9A0I4</accession>
<dbReference type="EC" id="2.5.1.7" evidence="1"/>
<dbReference type="EMBL" id="AE009949">
    <property type="protein sequence ID" value="AAL97485.1"/>
    <property type="molecule type" value="Genomic_DNA"/>
</dbReference>
<dbReference type="RefSeq" id="WP_002994428.1">
    <property type="nucleotide sequence ID" value="NC_003485.1"/>
</dbReference>
<dbReference type="SMR" id="P65459"/>
<dbReference type="KEGG" id="spm:spyM18_0821"/>
<dbReference type="HOGENOM" id="CLU_027387_0_0_9"/>
<dbReference type="UniPathway" id="UPA00219"/>
<dbReference type="GO" id="GO:0005737">
    <property type="term" value="C:cytoplasm"/>
    <property type="evidence" value="ECO:0007669"/>
    <property type="project" value="UniProtKB-SubCell"/>
</dbReference>
<dbReference type="GO" id="GO:0008760">
    <property type="term" value="F:UDP-N-acetylglucosamine 1-carboxyvinyltransferase activity"/>
    <property type="evidence" value="ECO:0007669"/>
    <property type="project" value="UniProtKB-UniRule"/>
</dbReference>
<dbReference type="GO" id="GO:0051301">
    <property type="term" value="P:cell division"/>
    <property type="evidence" value="ECO:0007669"/>
    <property type="project" value="UniProtKB-KW"/>
</dbReference>
<dbReference type="GO" id="GO:0071555">
    <property type="term" value="P:cell wall organization"/>
    <property type="evidence" value="ECO:0007669"/>
    <property type="project" value="UniProtKB-KW"/>
</dbReference>
<dbReference type="GO" id="GO:0009252">
    <property type="term" value="P:peptidoglycan biosynthetic process"/>
    <property type="evidence" value="ECO:0007669"/>
    <property type="project" value="UniProtKB-UniRule"/>
</dbReference>
<dbReference type="GO" id="GO:0008360">
    <property type="term" value="P:regulation of cell shape"/>
    <property type="evidence" value="ECO:0007669"/>
    <property type="project" value="UniProtKB-KW"/>
</dbReference>
<dbReference type="GO" id="GO:0019277">
    <property type="term" value="P:UDP-N-acetylgalactosamine biosynthetic process"/>
    <property type="evidence" value="ECO:0007669"/>
    <property type="project" value="InterPro"/>
</dbReference>
<dbReference type="CDD" id="cd01555">
    <property type="entry name" value="UdpNAET"/>
    <property type="match status" value="1"/>
</dbReference>
<dbReference type="FunFam" id="3.65.10.10:FF:000001">
    <property type="entry name" value="UDP-N-acetylglucosamine 1-carboxyvinyltransferase"/>
    <property type="match status" value="1"/>
</dbReference>
<dbReference type="Gene3D" id="3.65.10.10">
    <property type="entry name" value="Enolpyruvate transferase domain"/>
    <property type="match status" value="2"/>
</dbReference>
<dbReference type="HAMAP" id="MF_00111">
    <property type="entry name" value="MurA"/>
    <property type="match status" value="1"/>
</dbReference>
<dbReference type="InterPro" id="IPR001986">
    <property type="entry name" value="Enolpyruvate_Tfrase_dom"/>
</dbReference>
<dbReference type="InterPro" id="IPR036968">
    <property type="entry name" value="Enolpyruvate_Tfrase_sf"/>
</dbReference>
<dbReference type="InterPro" id="IPR050068">
    <property type="entry name" value="MurA_subfamily"/>
</dbReference>
<dbReference type="InterPro" id="IPR013792">
    <property type="entry name" value="RNA3'P_cycl/enolpyr_Trfase_a/b"/>
</dbReference>
<dbReference type="InterPro" id="IPR005750">
    <property type="entry name" value="UDP_GlcNAc_COvinyl_MurA"/>
</dbReference>
<dbReference type="NCBIfam" id="TIGR01072">
    <property type="entry name" value="murA"/>
    <property type="match status" value="1"/>
</dbReference>
<dbReference type="NCBIfam" id="NF006873">
    <property type="entry name" value="PRK09369.1"/>
    <property type="match status" value="1"/>
</dbReference>
<dbReference type="PANTHER" id="PTHR43783">
    <property type="entry name" value="UDP-N-ACETYLGLUCOSAMINE 1-CARBOXYVINYLTRANSFERASE"/>
    <property type="match status" value="1"/>
</dbReference>
<dbReference type="PANTHER" id="PTHR43783:SF1">
    <property type="entry name" value="UDP-N-ACETYLGLUCOSAMINE 1-CARBOXYVINYLTRANSFERASE"/>
    <property type="match status" value="1"/>
</dbReference>
<dbReference type="Pfam" id="PF00275">
    <property type="entry name" value="EPSP_synthase"/>
    <property type="match status" value="1"/>
</dbReference>
<dbReference type="SUPFAM" id="SSF55205">
    <property type="entry name" value="EPT/RTPC-like"/>
    <property type="match status" value="1"/>
</dbReference>
<sequence>MDKIIIEGGQTRLEGEVVIEGAKNAVLPLLAASILPSKGKTILRNVPILSDVFTMNNVVRGLDIRVDFNEAANEITVDASGHILDEAPYEYVSQMRASIVVLGPILARNGHAKVSMPGGCTIGSRPINLHLKGLEAMGATITQKGGDITAQADRLQGAMIYMDFPSVGATQNLMMAATLADGVTTIENAAREPEIVDLAQFLNKMGARIRGAGTETLTITGVTHLRGVEHDVVQDRIEAGTFMVAAAMTSGNVLIRDAVWEHNRPLISKLMEMGVSVTEEEYGIRVQANTPKLKPVTVKTLPHPGFPTDMQAQFTALMAVVNGESTMVETVFENRFQHLEEMRRMGLQSEILRETAMIHGGRQLQGAPVMSTDLRASAALILTGIVAQGVTIVNNLVHLDRGYYQFHEKLAKLGATISRSSEV</sequence>
<organism>
    <name type="scientific">Streptococcus pyogenes serotype M18 (strain MGAS8232)</name>
    <dbReference type="NCBI Taxonomy" id="186103"/>
    <lineage>
        <taxon>Bacteria</taxon>
        <taxon>Bacillati</taxon>
        <taxon>Bacillota</taxon>
        <taxon>Bacilli</taxon>
        <taxon>Lactobacillales</taxon>
        <taxon>Streptococcaceae</taxon>
        <taxon>Streptococcus</taxon>
    </lineage>
</organism>